<accession>O33525</accession>
<accession>Q1MAW0</accession>
<proteinExistence type="inferred from homology"/>
<comment type="function">
    <text evidence="1">Catalyzes the reversible oxidation of malate to oxaloacetate.</text>
</comment>
<comment type="catalytic activity">
    <reaction evidence="1">
        <text>(S)-malate + NAD(+) = oxaloacetate + NADH + H(+)</text>
        <dbReference type="Rhea" id="RHEA:21432"/>
        <dbReference type="ChEBI" id="CHEBI:15378"/>
        <dbReference type="ChEBI" id="CHEBI:15589"/>
        <dbReference type="ChEBI" id="CHEBI:16452"/>
        <dbReference type="ChEBI" id="CHEBI:57540"/>
        <dbReference type="ChEBI" id="CHEBI:57945"/>
        <dbReference type="EC" id="1.1.1.37"/>
    </reaction>
</comment>
<comment type="similarity">
    <text evidence="1">Belongs to the LDH/MDH superfamily. MDH type 3 family.</text>
</comment>
<dbReference type="EC" id="1.1.1.37" evidence="1"/>
<dbReference type="EMBL" id="AJ002750">
    <property type="protein sequence ID" value="CAA05717.1"/>
    <property type="molecule type" value="Genomic_DNA"/>
</dbReference>
<dbReference type="EMBL" id="AM236080">
    <property type="protein sequence ID" value="CAK09925.1"/>
    <property type="molecule type" value="Genomic_DNA"/>
</dbReference>
<dbReference type="RefSeq" id="WP_003543522.1">
    <property type="nucleotide sequence ID" value="NC_008380.1"/>
</dbReference>
<dbReference type="SMR" id="O33525"/>
<dbReference type="EnsemblBacteria" id="CAK09925">
    <property type="protein sequence ID" value="CAK09925"/>
    <property type="gene ID" value="RL4439"/>
</dbReference>
<dbReference type="GeneID" id="84672083"/>
<dbReference type="KEGG" id="rle:RL4439"/>
<dbReference type="eggNOG" id="COG0039">
    <property type="taxonomic scope" value="Bacteria"/>
</dbReference>
<dbReference type="HOGENOM" id="CLU_045401_2_1_5"/>
<dbReference type="Proteomes" id="UP000006575">
    <property type="component" value="Chromosome"/>
</dbReference>
<dbReference type="GO" id="GO:0004459">
    <property type="term" value="F:L-lactate dehydrogenase activity"/>
    <property type="evidence" value="ECO:0007669"/>
    <property type="project" value="TreeGrafter"/>
</dbReference>
<dbReference type="GO" id="GO:0030060">
    <property type="term" value="F:L-malate dehydrogenase (NAD+) activity"/>
    <property type="evidence" value="ECO:0007669"/>
    <property type="project" value="UniProtKB-UniRule"/>
</dbReference>
<dbReference type="GO" id="GO:0006089">
    <property type="term" value="P:lactate metabolic process"/>
    <property type="evidence" value="ECO:0007669"/>
    <property type="project" value="TreeGrafter"/>
</dbReference>
<dbReference type="GO" id="GO:0006099">
    <property type="term" value="P:tricarboxylic acid cycle"/>
    <property type="evidence" value="ECO:0007669"/>
    <property type="project" value="UniProtKB-UniRule"/>
</dbReference>
<dbReference type="CDD" id="cd01339">
    <property type="entry name" value="LDH-like_MDH"/>
    <property type="match status" value="1"/>
</dbReference>
<dbReference type="FunFam" id="3.40.50.720:FF:000018">
    <property type="entry name" value="Malate dehydrogenase"/>
    <property type="match status" value="1"/>
</dbReference>
<dbReference type="FunFam" id="3.90.110.10:FF:000004">
    <property type="entry name" value="Malate dehydrogenase"/>
    <property type="match status" value="1"/>
</dbReference>
<dbReference type="Gene3D" id="3.90.110.10">
    <property type="entry name" value="Lactate dehydrogenase/glycoside hydrolase, family 4, C-terminal"/>
    <property type="match status" value="1"/>
</dbReference>
<dbReference type="Gene3D" id="3.40.50.720">
    <property type="entry name" value="NAD(P)-binding Rossmann-like Domain"/>
    <property type="match status" value="1"/>
</dbReference>
<dbReference type="HAMAP" id="MF_00487">
    <property type="entry name" value="Malate_dehydrog_3"/>
    <property type="match status" value="1"/>
</dbReference>
<dbReference type="InterPro" id="IPR001557">
    <property type="entry name" value="L-lactate/malate_DH"/>
</dbReference>
<dbReference type="InterPro" id="IPR022383">
    <property type="entry name" value="Lactate/malate_DH_C"/>
</dbReference>
<dbReference type="InterPro" id="IPR001236">
    <property type="entry name" value="Lactate/malate_DH_N"/>
</dbReference>
<dbReference type="InterPro" id="IPR015955">
    <property type="entry name" value="Lactate_DH/Glyco_Ohase_4_C"/>
</dbReference>
<dbReference type="InterPro" id="IPR011275">
    <property type="entry name" value="Malate_DH_type3"/>
</dbReference>
<dbReference type="InterPro" id="IPR036291">
    <property type="entry name" value="NAD(P)-bd_dom_sf"/>
</dbReference>
<dbReference type="NCBIfam" id="TIGR01763">
    <property type="entry name" value="MalateDH_bact"/>
    <property type="match status" value="1"/>
</dbReference>
<dbReference type="NCBIfam" id="NF004863">
    <property type="entry name" value="PRK06223.1"/>
    <property type="match status" value="1"/>
</dbReference>
<dbReference type="PANTHER" id="PTHR43128">
    <property type="entry name" value="L-2-HYDROXYCARBOXYLATE DEHYDROGENASE (NAD(P)(+))"/>
    <property type="match status" value="1"/>
</dbReference>
<dbReference type="PANTHER" id="PTHR43128:SF16">
    <property type="entry name" value="L-LACTATE DEHYDROGENASE"/>
    <property type="match status" value="1"/>
</dbReference>
<dbReference type="Pfam" id="PF02866">
    <property type="entry name" value="Ldh_1_C"/>
    <property type="match status" value="1"/>
</dbReference>
<dbReference type="Pfam" id="PF00056">
    <property type="entry name" value="Ldh_1_N"/>
    <property type="match status" value="1"/>
</dbReference>
<dbReference type="PIRSF" id="PIRSF000102">
    <property type="entry name" value="Lac_mal_DH"/>
    <property type="match status" value="1"/>
</dbReference>
<dbReference type="PRINTS" id="PR00086">
    <property type="entry name" value="LLDHDRGNASE"/>
</dbReference>
<dbReference type="SUPFAM" id="SSF56327">
    <property type="entry name" value="LDH C-terminal domain-like"/>
    <property type="match status" value="1"/>
</dbReference>
<dbReference type="SUPFAM" id="SSF51735">
    <property type="entry name" value="NAD(P)-binding Rossmann-fold domains"/>
    <property type="match status" value="1"/>
</dbReference>
<keyword id="KW-0520">NAD</keyword>
<keyword id="KW-0560">Oxidoreductase</keyword>
<keyword id="KW-0816">Tricarboxylic acid cycle</keyword>
<reference key="1">
    <citation type="submission" date="1997-11" db="EMBL/GenBank/DDBJ databases">
        <authorList>
            <person name="Poole P.S."/>
            <person name="Allaway D."/>
            <person name="Smith M."/>
        </authorList>
    </citation>
    <scope>NUCLEOTIDE SEQUENCE [GENOMIC DNA]</scope>
</reference>
<reference key="2">
    <citation type="journal article" date="2006" name="Genome Biol.">
        <title>The genome of Rhizobium leguminosarum has recognizable core and accessory components.</title>
        <authorList>
            <person name="Young J.P.W."/>
            <person name="Crossman L.C."/>
            <person name="Johnston A.W.B."/>
            <person name="Thomson N.R."/>
            <person name="Ghazoui Z.F."/>
            <person name="Hull K.H."/>
            <person name="Wexler M."/>
            <person name="Curson A.R.J."/>
            <person name="Todd J.D."/>
            <person name="Poole P.S."/>
            <person name="Mauchline T.H."/>
            <person name="East A.K."/>
            <person name="Quail M.A."/>
            <person name="Churcher C."/>
            <person name="Arrowsmith C."/>
            <person name="Cherevach I."/>
            <person name="Chillingworth T."/>
            <person name="Clarke K."/>
            <person name="Cronin A."/>
            <person name="Davis P."/>
            <person name="Fraser A."/>
            <person name="Hance Z."/>
            <person name="Hauser H."/>
            <person name="Jagels K."/>
            <person name="Moule S."/>
            <person name="Mungall K."/>
            <person name="Norbertczak H."/>
            <person name="Rabbinowitsch E."/>
            <person name="Sanders M."/>
            <person name="Simmonds M."/>
            <person name="Whitehead S."/>
            <person name="Parkhill J."/>
        </authorList>
    </citation>
    <scope>NUCLEOTIDE SEQUENCE [LARGE SCALE GENOMIC DNA]</scope>
    <source>
        <strain>DSM 114642 / LMG 32736 / 3841</strain>
    </source>
</reference>
<name>MDH_RHIJ3</name>
<gene>
    <name evidence="1" type="primary">mdh</name>
    <name type="ordered locus">RL4439</name>
</gene>
<protein>
    <recommendedName>
        <fullName evidence="1">Malate dehydrogenase</fullName>
        <ecNumber evidence="1">1.1.1.37</ecNumber>
    </recommendedName>
</protein>
<evidence type="ECO:0000255" key="1">
    <source>
        <dbReference type="HAMAP-Rule" id="MF_00487"/>
    </source>
</evidence>
<organism>
    <name type="scientific">Rhizobium johnstonii (strain DSM 114642 / LMG 32736 / 3841)</name>
    <name type="common">Rhizobium leguminosarum bv. viciae</name>
    <dbReference type="NCBI Taxonomy" id="216596"/>
    <lineage>
        <taxon>Bacteria</taxon>
        <taxon>Pseudomonadati</taxon>
        <taxon>Pseudomonadota</taxon>
        <taxon>Alphaproteobacteria</taxon>
        <taxon>Hyphomicrobiales</taxon>
        <taxon>Rhizobiaceae</taxon>
        <taxon>Rhizobium/Agrobacterium group</taxon>
        <taxon>Rhizobium</taxon>
        <taxon>Rhizobium johnstonii</taxon>
    </lineage>
</organism>
<feature type="chain" id="PRO_0000113462" description="Malate dehydrogenase">
    <location>
        <begin position="1"/>
        <end position="320"/>
    </location>
</feature>
<feature type="active site" description="Proton acceptor" evidence="1">
    <location>
        <position position="176"/>
    </location>
</feature>
<feature type="binding site" evidence="1">
    <location>
        <begin position="10"/>
        <end position="15"/>
    </location>
    <ligand>
        <name>NAD(+)</name>
        <dbReference type="ChEBI" id="CHEBI:57540"/>
    </ligand>
</feature>
<feature type="binding site" evidence="1">
    <location>
        <position position="34"/>
    </location>
    <ligand>
        <name>NAD(+)</name>
        <dbReference type="ChEBI" id="CHEBI:57540"/>
    </ligand>
</feature>
<feature type="binding site" evidence="1">
    <location>
        <position position="83"/>
    </location>
    <ligand>
        <name>substrate</name>
    </ligand>
</feature>
<feature type="binding site" evidence="1">
    <location>
        <position position="89"/>
    </location>
    <ligand>
        <name>substrate</name>
    </ligand>
</feature>
<feature type="binding site" evidence="1">
    <location>
        <position position="96"/>
    </location>
    <ligand>
        <name>NAD(+)</name>
        <dbReference type="ChEBI" id="CHEBI:57540"/>
    </ligand>
</feature>
<feature type="binding site" evidence="1">
    <location>
        <begin position="119"/>
        <end position="121"/>
    </location>
    <ligand>
        <name>NAD(+)</name>
        <dbReference type="ChEBI" id="CHEBI:57540"/>
    </ligand>
</feature>
<feature type="binding site" evidence="1">
    <location>
        <position position="121"/>
    </location>
    <ligand>
        <name>substrate</name>
    </ligand>
</feature>
<feature type="binding site" evidence="1">
    <location>
        <position position="152"/>
    </location>
    <ligand>
        <name>substrate</name>
    </ligand>
</feature>
<sequence length="320" mass="33590">MARNKIALIGSGMIGGTLAHLAGLKELGDIVLFDIADGIPQGKGLDISQSSPVEGFDVNLTGASDYSAIEGADVCIVTAGVARKPGMSRDDLLGINLKVMEQVGAGIKKYAPNAFVICITNPLDAMVWALQKFSGLPANKVVGMAGVLDSSRFRLFLAKEFNVSVQDVTAFVLGGHGDTMVPLARYSTVGGIPLTDLVTMGWVTKERLEEIIQRTRDGGAEIVGLLKTGSAYYAPAASAIEMAESYLKDKKRVLPCAAHLSGQYGVKDMYVGVPTVIGAGGVERIIEIDLNKTEKEAFDKSVGAVAGLCEACINIAPALK</sequence>